<organism>
    <name type="scientific">Streptococcus pneumoniae serotype 4 (strain ATCC BAA-334 / TIGR4)</name>
    <dbReference type="NCBI Taxonomy" id="170187"/>
    <lineage>
        <taxon>Bacteria</taxon>
        <taxon>Bacillati</taxon>
        <taxon>Bacillota</taxon>
        <taxon>Bacilli</taxon>
        <taxon>Lactobacillales</taxon>
        <taxon>Streptococcaceae</taxon>
        <taxon>Streptococcus</taxon>
    </lineage>
</organism>
<proteinExistence type="inferred from homology"/>
<name>RL36_STRPN</name>
<comment type="similarity">
    <text evidence="1">Belongs to the bacterial ribosomal protein bL36 family.</text>
</comment>
<keyword id="KW-1185">Reference proteome</keyword>
<keyword id="KW-0687">Ribonucleoprotein</keyword>
<keyword id="KW-0689">Ribosomal protein</keyword>
<sequence>MKVRPSVKPICEYCKVIRRNGRVMVICPANPKHKQRQG</sequence>
<evidence type="ECO:0000305" key="1"/>
<feature type="chain" id="PRO_0000126268" description="Large ribosomal subunit protein bL36">
    <location>
        <begin position="1"/>
        <end position="38"/>
    </location>
</feature>
<gene>
    <name type="primary">rpmJ</name>
    <name type="ordered locus">SP_0233</name>
</gene>
<reference key="1">
    <citation type="journal article" date="2001" name="Science">
        <title>Complete genome sequence of a virulent isolate of Streptococcus pneumoniae.</title>
        <authorList>
            <person name="Tettelin H."/>
            <person name="Nelson K.E."/>
            <person name="Paulsen I.T."/>
            <person name="Eisen J.A."/>
            <person name="Read T.D."/>
            <person name="Peterson S.N."/>
            <person name="Heidelberg J.F."/>
            <person name="DeBoy R.T."/>
            <person name="Haft D.H."/>
            <person name="Dodson R.J."/>
            <person name="Durkin A.S."/>
            <person name="Gwinn M.L."/>
            <person name="Kolonay J.F."/>
            <person name="Nelson W.C."/>
            <person name="Peterson J.D."/>
            <person name="Umayam L.A."/>
            <person name="White O."/>
            <person name="Salzberg S.L."/>
            <person name="Lewis M.R."/>
            <person name="Radune D."/>
            <person name="Holtzapple E.K."/>
            <person name="Khouri H.M."/>
            <person name="Wolf A.M."/>
            <person name="Utterback T.R."/>
            <person name="Hansen C.L."/>
            <person name="McDonald L.A."/>
            <person name="Feldblyum T.V."/>
            <person name="Angiuoli S.V."/>
            <person name="Dickinson T."/>
            <person name="Hickey E.K."/>
            <person name="Holt I.E."/>
            <person name="Loftus B.J."/>
            <person name="Yang F."/>
            <person name="Smith H.O."/>
            <person name="Venter J.C."/>
            <person name="Dougherty B.A."/>
            <person name="Morrison D.A."/>
            <person name="Hollingshead S.K."/>
            <person name="Fraser C.M."/>
        </authorList>
    </citation>
    <scope>NUCLEOTIDE SEQUENCE [LARGE SCALE GENOMIC DNA]</scope>
    <source>
        <strain>ATCC BAA-334 / TIGR4</strain>
    </source>
</reference>
<dbReference type="EMBL" id="AE005672">
    <property type="protein sequence ID" value="AAK74413.1"/>
    <property type="molecule type" value="Genomic_DNA"/>
</dbReference>
<dbReference type="PIR" id="D95027">
    <property type="entry name" value="D95027"/>
</dbReference>
<dbReference type="RefSeq" id="WP_001808836.1">
    <property type="nucleotide sequence ID" value="NZ_CP155539.1"/>
</dbReference>
<dbReference type="SMR" id="P0A495"/>
<dbReference type="PaxDb" id="170187-SP_0233"/>
<dbReference type="EnsemblBacteria" id="AAK74413">
    <property type="protein sequence ID" value="AAK74413"/>
    <property type="gene ID" value="SP_0233"/>
</dbReference>
<dbReference type="GeneID" id="93964224"/>
<dbReference type="KEGG" id="spn:SP_0233"/>
<dbReference type="eggNOG" id="COG0257">
    <property type="taxonomic scope" value="Bacteria"/>
</dbReference>
<dbReference type="PhylomeDB" id="P0A495"/>
<dbReference type="BioCyc" id="SPNE170187:G1FZB-237-MONOMER"/>
<dbReference type="Proteomes" id="UP000000585">
    <property type="component" value="Chromosome"/>
</dbReference>
<dbReference type="GO" id="GO:0005737">
    <property type="term" value="C:cytoplasm"/>
    <property type="evidence" value="ECO:0007669"/>
    <property type="project" value="UniProtKB-ARBA"/>
</dbReference>
<dbReference type="GO" id="GO:1990904">
    <property type="term" value="C:ribonucleoprotein complex"/>
    <property type="evidence" value="ECO:0007669"/>
    <property type="project" value="UniProtKB-KW"/>
</dbReference>
<dbReference type="GO" id="GO:0005840">
    <property type="term" value="C:ribosome"/>
    <property type="evidence" value="ECO:0007669"/>
    <property type="project" value="UniProtKB-KW"/>
</dbReference>
<dbReference type="GO" id="GO:0003735">
    <property type="term" value="F:structural constituent of ribosome"/>
    <property type="evidence" value="ECO:0007669"/>
    <property type="project" value="InterPro"/>
</dbReference>
<dbReference type="GO" id="GO:0006412">
    <property type="term" value="P:translation"/>
    <property type="evidence" value="ECO:0007669"/>
    <property type="project" value="UniProtKB-UniRule"/>
</dbReference>
<dbReference type="HAMAP" id="MF_00251">
    <property type="entry name" value="Ribosomal_bL36"/>
    <property type="match status" value="1"/>
</dbReference>
<dbReference type="InterPro" id="IPR000473">
    <property type="entry name" value="Ribosomal_bL36"/>
</dbReference>
<dbReference type="InterPro" id="IPR035977">
    <property type="entry name" value="Ribosomal_bL36_sp"/>
</dbReference>
<dbReference type="NCBIfam" id="TIGR01022">
    <property type="entry name" value="rpmJ_bact"/>
    <property type="match status" value="1"/>
</dbReference>
<dbReference type="PANTHER" id="PTHR42888">
    <property type="entry name" value="50S RIBOSOMAL PROTEIN L36, CHLOROPLASTIC"/>
    <property type="match status" value="1"/>
</dbReference>
<dbReference type="PANTHER" id="PTHR42888:SF1">
    <property type="entry name" value="LARGE RIBOSOMAL SUBUNIT PROTEIN BL36C"/>
    <property type="match status" value="1"/>
</dbReference>
<dbReference type="Pfam" id="PF00444">
    <property type="entry name" value="Ribosomal_L36"/>
    <property type="match status" value="1"/>
</dbReference>
<dbReference type="SUPFAM" id="SSF57840">
    <property type="entry name" value="Ribosomal protein L36"/>
    <property type="match status" value="1"/>
</dbReference>
<dbReference type="PROSITE" id="PS00828">
    <property type="entry name" value="RIBOSOMAL_L36"/>
    <property type="match status" value="1"/>
</dbReference>
<protein>
    <recommendedName>
        <fullName evidence="1">Large ribosomal subunit protein bL36</fullName>
    </recommendedName>
    <alternativeName>
        <fullName>50S ribosomal protein L36</fullName>
    </alternativeName>
</protein>
<accession>P0A495</accession>
<accession>P27146</accession>